<keyword id="KW-0143">Chaperone</keyword>
<keyword id="KW-0256">Endoplasmic reticulum</keyword>
<keyword id="KW-0472">Membrane</keyword>
<keyword id="KW-1185">Reference proteome</keyword>
<keyword id="KW-0732">Signal</keyword>
<keyword id="KW-0812">Transmembrane</keyword>
<keyword id="KW-1133">Transmembrane helix</keyword>
<evidence type="ECO:0000255" key="1"/>
<evidence type="ECO:0000255" key="2">
    <source>
        <dbReference type="PROSITE-ProRule" id="PRU00286"/>
    </source>
</evidence>
<evidence type="ECO:0000256" key="3">
    <source>
        <dbReference type="SAM" id="MobiDB-lite"/>
    </source>
</evidence>
<evidence type="ECO:0000269" key="4">
    <source>
    </source>
</evidence>
<evidence type="ECO:0000269" key="5">
    <source>
    </source>
</evidence>
<evidence type="ECO:0000305" key="6"/>
<sequence length="295" mass="34191">MNGYWKPALVVLGLVSLSYAFTTIETEIFQLQNEISTKYGPDMNFYKFLKLPKLQNSSTKEITKNLRKLSKKYHPDKNPKYRKLYERLNLATQILSNSSNRKIYDYYLQNGFPNYDFHKGGFYFSRMKPKTWFLLAFIWIVVNIGQYIISIIQYRSQRSRIENFISQCKQQDDTNGLGVKQLTFKQHEKDEGKSLVVRFSDVYVVEPDGSETLISPDTLDKPSVKNCLFWRIPASVWNMTFGKSVGSAGKEEIITDSKKYDGNQTKKGNKVKKGSAKKGQKKMELPNGKVIYSRK</sequence>
<comment type="function">
    <text evidence="5">DnaJ-like chaperone required for the folding capacity of the endoplasmic reticulum.</text>
</comment>
<comment type="subcellular location">
    <subcellularLocation>
        <location evidence="4 5">Endoplasmic reticulum membrane</location>
        <topology evidence="4 5">Single-pass type I membrane protein</topology>
    </subcellularLocation>
</comment>
<comment type="similarity">
    <text evidence="6">Belongs to the DnaJ family.</text>
</comment>
<name>ERJ5_YEAST</name>
<accession>P43613</accession>
<accession>D6VTS4</accession>
<gene>
    <name type="primary">ERJ5</name>
    <name type="ordered locus">YFR041C</name>
</gene>
<organism>
    <name type="scientific">Saccharomyces cerevisiae (strain ATCC 204508 / S288c)</name>
    <name type="common">Baker's yeast</name>
    <dbReference type="NCBI Taxonomy" id="559292"/>
    <lineage>
        <taxon>Eukaryota</taxon>
        <taxon>Fungi</taxon>
        <taxon>Dikarya</taxon>
        <taxon>Ascomycota</taxon>
        <taxon>Saccharomycotina</taxon>
        <taxon>Saccharomycetes</taxon>
        <taxon>Saccharomycetales</taxon>
        <taxon>Saccharomycetaceae</taxon>
        <taxon>Saccharomyces</taxon>
    </lineage>
</organism>
<feature type="signal peptide">
    <location>
        <begin position="1"/>
        <end position="20"/>
    </location>
</feature>
<feature type="chain" id="PRO_0000007272" description="ER-localized J domain-containing protein 5">
    <location>
        <begin position="21"/>
        <end position="295"/>
    </location>
</feature>
<feature type="topological domain" description="Lumenal">
    <location>
        <begin position="21"/>
        <end position="130"/>
    </location>
</feature>
<feature type="transmembrane region" description="Helical" evidence="1">
    <location>
        <begin position="131"/>
        <end position="151"/>
    </location>
</feature>
<feature type="topological domain" description="Cytoplasmic">
    <location>
        <begin position="152"/>
        <end position="295"/>
    </location>
</feature>
<feature type="domain" description="J" evidence="2">
    <location>
        <begin position="42"/>
        <end position="110"/>
    </location>
</feature>
<feature type="region of interest" description="Disordered" evidence="3">
    <location>
        <begin position="259"/>
        <end position="287"/>
    </location>
</feature>
<feature type="compositionally biased region" description="Basic residues" evidence="3">
    <location>
        <begin position="267"/>
        <end position="280"/>
    </location>
</feature>
<dbReference type="EMBL" id="D50617">
    <property type="protein sequence ID" value="BAA09280.1"/>
    <property type="molecule type" value="Genomic_DNA"/>
</dbReference>
<dbReference type="EMBL" id="BK006940">
    <property type="protein sequence ID" value="DAA12484.1"/>
    <property type="molecule type" value="Genomic_DNA"/>
</dbReference>
<dbReference type="PIR" id="S56296">
    <property type="entry name" value="S56296"/>
</dbReference>
<dbReference type="RefSeq" id="NP_116699.3">
    <property type="nucleotide sequence ID" value="NM_001180006.3"/>
</dbReference>
<dbReference type="SMR" id="P43613"/>
<dbReference type="BioGRID" id="31199">
    <property type="interactions" value="47"/>
</dbReference>
<dbReference type="FunCoup" id="P43613">
    <property type="interactions" value="63"/>
</dbReference>
<dbReference type="IntAct" id="P43613">
    <property type="interactions" value="3"/>
</dbReference>
<dbReference type="MINT" id="P43613"/>
<dbReference type="STRING" id="4932.YFR041C"/>
<dbReference type="iPTMnet" id="P43613"/>
<dbReference type="PaxDb" id="4932-YFR041C"/>
<dbReference type="PeptideAtlas" id="P43613"/>
<dbReference type="EnsemblFungi" id="YFR041C_mRNA">
    <property type="protein sequence ID" value="YFR041C"/>
    <property type="gene ID" value="YFR041C"/>
</dbReference>
<dbReference type="GeneID" id="850602"/>
<dbReference type="KEGG" id="sce:YFR041C"/>
<dbReference type="AGR" id="SGD:S000001937"/>
<dbReference type="SGD" id="S000001937">
    <property type="gene designation" value="ERJ5"/>
</dbReference>
<dbReference type="VEuPathDB" id="FungiDB:YFR041C"/>
<dbReference type="eggNOG" id="KOG0724">
    <property type="taxonomic scope" value="Eukaryota"/>
</dbReference>
<dbReference type="HOGENOM" id="CLU_037236_2_0_1"/>
<dbReference type="InParanoid" id="P43613"/>
<dbReference type="OMA" id="RRYDYFY"/>
<dbReference type="OrthoDB" id="413400at2759"/>
<dbReference type="BioCyc" id="YEAST:G3O-30488-MONOMER"/>
<dbReference type="BioGRID-ORCS" id="850602">
    <property type="hits" value="0 hits in 10 CRISPR screens"/>
</dbReference>
<dbReference type="PRO" id="PR:P43613"/>
<dbReference type="Proteomes" id="UP000002311">
    <property type="component" value="Chromosome VI"/>
</dbReference>
<dbReference type="RNAct" id="P43613">
    <property type="molecule type" value="protein"/>
</dbReference>
<dbReference type="GO" id="GO:0005783">
    <property type="term" value="C:endoplasmic reticulum"/>
    <property type="evidence" value="ECO:0000314"/>
    <property type="project" value="SGD"/>
</dbReference>
<dbReference type="GO" id="GO:0005789">
    <property type="term" value="C:endoplasmic reticulum membrane"/>
    <property type="evidence" value="ECO:0000318"/>
    <property type="project" value="GO_Central"/>
</dbReference>
<dbReference type="GO" id="GO:0006457">
    <property type="term" value="P:protein folding"/>
    <property type="evidence" value="ECO:0000315"/>
    <property type="project" value="SGD"/>
</dbReference>
<dbReference type="CDD" id="cd06257">
    <property type="entry name" value="DnaJ"/>
    <property type="match status" value="1"/>
</dbReference>
<dbReference type="FunFam" id="1.10.287.110:FF:000116">
    <property type="entry name" value="Erj5p"/>
    <property type="match status" value="1"/>
</dbReference>
<dbReference type="Gene3D" id="1.10.287.110">
    <property type="entry name" value="DnaJ domain"/>
    <property type="match status" value="1"/>
</dbReference>
<dbReference type="InterPro" id="IPR001623">
    <property type="entry name" value="DnaJ_domain"/>
</dbReference>
<dbReference type="InterPro" id="IPR018253">
    <property type="entry name" value="DnaJ_domain_CS"/>
</dbReference>
<dbReference type="InterPro" id="IPR052606">
    <property type="entry name" value="DnaJ_domain_protein"/>
</dbReference>
<dbReference type="InterPro" id="IPR036869">
    <property type="entry name" value="J_dom_sf"/>
</dbReference>
<dbReference type="PANTHER" id="PTHR44653">
    <property type="entry name" value="DNAJ HOMOLOG SUBFAMILY C MEMBER 1"/>
    <property type="match status" value="1"/>
</dbReference>
<dbReference type="PANTHER" id="PTHR44653:SF2">
    <property type="entry name" value="DNAJ HOMOLOG SUBFAMILY C MEMBER 1"/>
    <property type="match status" value="1"/>
</dbReference>
<dbReference type="Pfam" id="PF00226">
    <property type="entry name" value="DnaJ"/>
    <property type="match status" value="1"/>
</dbReference>
<dbReference type="SMART" id="SM00271">
    <property type="entry name" value="DnaJ"/>
    <property type="match status" value="1"/>
</dbReference>
<dbReference type="SUPFAM" id="SSF46565">
    <property type="entry name" value="Chaperone J-domain"/>
    <property type="match status" value="1"/>
</dbReference>
<dbReference type="PROSITE" id="PS00636">
    <property type="entry name" value="DNAJ_1"/>
    <property type="match status" value="1"/>
</dbReference>
<dbReference type="PROSITE" id="PS50076">
    <property type="entry name" value="DNAJ_2"/>
    <property type="match status" value="1"/>
</dbReference>
<proteinExistence type="evidence at protein level"/>
<protein>
    <recommendedName>
        <fullName>ER-localized J domain-containing protein 5</fullName>
    </recommendedName>
</protein>
<reference key="1">
    <citation type="journal article" date="1996" name="Yeast">
        <title>Analysis of a 36.2 kb DNA sequence including the right telomere of chromosome VI from Saccharomyces cerevisiae.</title>
        <authorList>
            <person name="Eki T."/>
            <person name="Naitou M."/>
            <person name="Hagiwara H."/>
            <person name="Ozawa M."/>
            <person name="Sasanuma S."/>
            <person name="Sasanuma M."/>
            <person name="Tsuchiya Y."/>
            <person name="Shibata T."/>
            <person name="Hanaoka F."/>
            <person name="Murakami Y."/>
        </authorList>
    </citation>
    <scope>NUCLEOTIDE SEQUENCE [GENOMIC DNA]</scope>
    <source>
        <strain>ATCC 204511 / S288c / AB972</strain>
    </source>
</reference>
<reference key="2">
    <citation type="journal article" date="1995" name="Nat. Genet.">
        <title>Analysis of the nucleotide sequence of chromosome VI from Saccharomyces cerevisiae.</title>
        <authorList>
            <person name="Murakami Y."/>
            <person name="Naitou M."/>
            <person name="Hagiwara H."/>
            <person name="Shibata T."/>
            <person name="Ozawa M."/>
            <person name="Sasanuma S."/>
            <person name="Sasanuma M."/>
            <person name="Tsuchiya Y."/>
            <person name="Soeda E."/>
            <person name="Yokoyama K."/>
            <person name="Yamazaki M."/>
            <person name="Tashiro H."/>
            <person name="Eki T."/>
        </authorList>
    </citation>
    <scope>NUCLEOTIDE SEQUENCE [LARGE SCALE GENOMIC DNA]</scope>
    <source>
        <strain>ATCC 204508 / S288c</strain>
    </source>
</reference>
<reference key="3">
    <citation type="journal article" date="2014" name="G3 (Bethesda)">
        <title>The reference genome sequence of Saccharomyces cerevisiae: Then and now.</title>
        <authorList>
            <person name="Engel S.R."/>
            <person name="Dietrich F.S."/>
            <person name="Fisk D.G."/>
            <person name="Binkley G."/>
            <person name="Balakrishnan R."/>
            <person name="Costanzo M.C."/>
            <person name="Dwight S.S."/>
            <person name="Hitz B.C."/>
            <person name="Karra K."/>
            <person name="Nash R.S."/>
            <person name="Weng S."/>
            <person name="Wong E.D."/>
            <person name="Lloyd P."/>
            <person name="Skrzypek M.S."/>
            <person name="Miyasato S.R."/>
            <person name="Simison M."/>
            <person name="Cherry J.M."/>
        </authorList>
    </citation>
    <scope>GENOME REANNOTATION</scope>
    <source>
        <strain>ATCC 204508 / S288c</strain>
    </source>
</reference>
<reference key="4">
    <citation type="journal article" date="2003" name="Nature">
        <title>Global analysis of protein localization in budding yeast.</title>
        <authorList>
            <person name="Huh W.-K."/>
            <person name="Falvo J.V."/>
            <person name="Gerke L.C."/>
            <person name="Carroll A.S."/>
            <person name="Howson R.W."/>
            <person name="Weissman J.S."/>
            <person name="O'Shea E.K."/>
        </authorList>
    </citation>
    <scope>SUBCELLULAR LOCATION [LARGE SCALE ANALYSIS]</scope>
</reference>
<reference key="5">
    <citation type="journal article" date="2006" name="Proc. Natl. Acad. Sci. U.S.A.">
        <title>A global topology map of the Saccharomyces cerevisiae membrane proteome.</title>
        <authorList>
            <person name="Kim H."/>
            <person name="Melen K."/>
            <person name="Oesterberg M."/>
            <person name="von Heijne G."/>
        </authorList>
    </citation>
    <scope>TOPOLOGY [LARGE SCALE ANALYSIS]</scope>
    <source>
        <strain>ATCC 208353 / W303-1A</strain>
    </source>
</reference>
<reference key="6">
    <citation type="journal article" date="2007" name="Biochim. Biophys. Acta">
        <title>The Saccharomyces cerevisiae YFR041C/ERJ5 gene encoding a type I membrane protein with a J domain is required to preserve the folding capacity of the endoplasmic reticulum.</title>
        <authorList>
            <person name="Carla Fama M."/>
            <person name="Raden D."/>
            <person name="Zacchi N."/>
            <person name="Lemos D.R."/>
            <person name="Robinson A.S."/>
            <person name="Silberstein S."/>
        </authorList>
    </citation>
    <scope>SUBCELLULAR LOCATION</scope>
    <scope>SIGNAL SEQUENCE CLEAVAGE</scope>
    <scope>TOPOLOGY</scope>
    <scope>FUNCTION</scope>
</reference>